<comment type="function">
    <text>Binds preferentially to single-stranded DNA and therefore, destabilizes double-stranded DNA. It is involved in DNA replication, repair and recombination. Binds ss-DNA as the replication fork advances and stimulates the replisome processivity and accuracy.</text>
</comment>
<comment type="subunit">
    <text evidence="1">Homodimer in the absence of DNA, monomer when binding DNA.</text>
</comment>
<comment type="miscellaneous">
    <text evidence="1">Interacts with the polymerase and the uvsX and uvsY proteins.</text>
</comment>
<sequence length="48" mass="5300">MFKRKSTAELAAQMAKLNGNKGFSSEDKGEWKLKLDNAGNGQAVIRFL</sequence>
<reference key="1">
    <citation type="submission" date="1997-11" db="EMBL/GenBank/DDBJ databases">
        <authorList>
            <person name="Theimer C.A."/>
            <person name="Krisch H.M."/>
            <person name="Giedroc D.P."/>
        </authorList>
    </citation>
    <scope>NUCLEOTIDE SEQUENCE [GENOMIC DNA]</scope>
</reference>
<keyword id="KW-0227">DNA damage</keyword>
<keyword id="KW-0233">DNA recombination</keyword>
<keyword id="KW-0234">DNA repair</keyword>
<keyword id="KW-0235">DNA replication</keyword>
<keyword id="KW-0238">DNA-binding</keyword>
<keyword id="KW-0479">Metal-binding</keyword>
<keyword id="KW-0862">Zinc</keyword>
<keyword id="KW-0863">Zinc-finger</keyword>
<accession>O21949</accession>
<gene>
    <name type="primary">32</name>
    <name type="synonym">ssb</name>
</gene>
<proteinExistence type="inferred from homology"/>
<feature type="chain" id="PRO_0000165052" description="Single-stranded DNA-binding protein">
    <location>
        <begin position="1"/>
        <end position="48" status="greater than"/>
    </location>
</feature>
<feature type="non-terminal residue">
    <location>
        <position position="48"/>
    </location>
</feature>
<dbReference type="EMBL" id="AF033322">
    <property type="protein sequence ID" value="AAB87487.1"/>
    <property type="molecule type" value="Genomic_DNA"/>
</dbReference>
<dbReference type="SMR" id="O21949"/>
<dbReference type="GO" id="GO:0003677">
    <property type="term" value="F:DNA binding"/>
    <property type="evidence" value="ECO:0007669"/>
    <property type="project" value="UniProtKB-KW"/>
</dbReference>
<dbReference type="GO" id="GO:0008270">
    <property type="term" value="F:zinc ion binding"/>
    <property type="evidence" value="ECO:0007669"/>
    <property type="project" value="UniProtKB-KW"/>
</dbReference>
<dbReference type="GO" id="GO:0006310">
    <property type="term" value="P:DNA recombination"/>
    <property type="evidence" value="ECO:0007669"/>
    <property type="project" value="UniProtKB-KW"/>
</dbReference>
<dbReference type="GO" id="GO:0006281">
    <property type="term" value="P:DNA repair"/>
    <property type="evidence" value="ECO:0007669"/>
    <property type="project" value="UniProtKB-KW"/>
</dbReference>
<dbReference type="GO" id="GO:0006260">
    <property type="term" value="P:DNA replication"/>
    <property type="evidence" value="ECO:0007669"/>
    <property type="project" value="UniProtKB-KW"/>
</dbReference>
<dbReference type="Gene3D" id="3.90.198.10">
    <property type="entry name" value="Replication Fork Single-Stranded Dna Binding Protein"/>
    <property type="match status" value="1"/>
</dbReference>
<dbReference type="InterPro" id="IPR012340">
    <property type="entry name" value="NA-bd_OB-fold"/>
</dbReference>
<dbReference type="InterPro" id="IPR044947">
    <property type="entry name" value="Phage_T4_Gp32_ssDNA-bd_sf"/>
</dbReference>
<dbReference type="SUPFAM" id="SSF50249">
    <property type="entry name" value="Nucleic acid-binding proteins"/>
    <property type="match status" value="1"/>
</dbReference>
<evidence type="ECO:0000250" key="1"/>
<organism>
    <name type="scientific">Enterobacteria phage PST</name>
    <name type="common">Bacteriophage PST</name>
    <dbReference type="NCBI Taxonomy" id="69607"/>
    <lineage>
        <taxon>Viruses</taxon>
        <taxon>Duplodnaviria</taxon>
        <taxon>Heunggongvirae</taxon>
        <taxon>Uroviricota</taxon>
        <taxon>Caudoviricetes</taxon>
        <taxon>Straboviridae</taxon>
        <taxon>Tevenvirinae</taxon>
        <taxon>Tequatrovirus</taxon>
    </lineage>
</organism>
<name>VHED_BPPST</name>
<protein>
    <recommendedName>
        <fullName>Single-stranded DNA-binding protein</fullName>
    </recommendedName>
    <alternativeName>
        <fullName>Gp32</fullName>
    </alternativeName>
    <alternativeName>
        <fullName>Helix-destabilizing protein</fullName>
    </alternativeName>
</protein>
<organismHost>
    <name type="scientific">Yersinia pseudotuberculosis</name>
    <dbReference type="NCBI Taxonomy" id="633"/>
</organismHost>